<accession>P18327</accession>
<feature type="initiator methionine" description="Removed" evidence="3">
    <location>
        <position position="1"/>
    </location>
</feature>
<feature type="chain" id="PRO_0000052215" description="Cytochrome P450-SU2">
    <location>
        <begin position="2"/>
        <end position="403"/>
    </location>
</feature>
<feature type="region of interest" description="Disordered" evidence="2">
    <location>
        <begin position="1"/>
        <end position="24"/>
    </location>
</feature>
<feature type="binding site" description="axial binding residue" evidence="1">
    <location>
        <position position="352"/>
    </location>
    <ligand>
        <name>heme</name>
        <dbReference type="ChEBI" id="CHEBI:30413"/>
    </ligand>
    <ligandPart>
        <name>Fe</name>
        <dbReference type="ChEBI" id="CHEBI:18248"/>
    </ligandPart>
</feature>
<comment type="function">
    <text>Metabolism of a number of sulfonylurea herbicides.</text>
</comment>
<comment type="cofactor">
    <cofactor evidence="1">
        <name>heme</name>
        <dbReference type="ChEBI" id="CHEBI:30413"/>
    </cofactor>
</comment>
<comment type="induction">
    <text>By herbicides.</text>
</comment>
<comment type="similarity">
    <text evidence="4">Belongs to the cytochrome P450 family.</text>
</comment>
<name>CPXF_STRGO</name>
<evidence type="ECO:0000250" key="1"/>
<evidence type="ECO:0000256" key="2">
    <source>
        <dbReference type="SAM" id="MobiDB-lite"/>
    </source>
</evidence>
<evidence type="ECO:0000269" key="3">
    <source>
    </source>
</evidence>
<evidence type="ECO:0000305" key="4"/>
<sequence length="403" mass="44410">MTTAERTAPPDALTVPASRAPGCPFDPAPDVTEAARTEPVTRATLWDGSSCWLVTRHQDVRAVLGDPRFSADAHRTGFPFLTAGGREIIGTNPTFLRMDDPEHARLRRMLTADFIVKKVEAMRPEVQRLADDLVDRMTTGRTSADLVTEFALPLPSLVICLLLGVPYEDHAFFQERSRVLLTLRSTPEEVRAAQDELLEYLARLARTKRERPDDAIISRLVARGELDDTQIATMGRLLLVAGHETTANMTALSTLVLLRNPDQLARLRAEPALVKGAVEELLRYLTIVHNGVPRIATEDVLIGGRTIAAGEGVLCMISSANRDAEVFPGGDDLDVARDARRHVAFGFGVHQCLGQPLARVELQIAIETLLRRLPDLRLAVPHEEIPFRGDMAIYGVHSLPIAW</sequence>
<reference key="1">
    <citation type="journal article" date="1990" name="J. Bacteriol.">
        <title>Genes for two herbicide-inducible cytochromes P-450 from Streptomyces griseolus.</title>
        <authorList>
            <person name="Omer C.A."/>
            <person name="Lenstra R."/>
            <person name="Litle P.J."/>
            <person name="Dean C."/>
            <person name="Tepperman J.M."/>
            <person name="Leto K.J."/>
            <person name="Romesser J.A."/>
            <person name="O'Keefe D.P."/>
        </authorList>
    </citation>
    <scope>NUCLEOTIDE SEQUENCE [GENOMIC DNA]</scope>
    <scope>PROTEIN SEQUENCE OF 2-33</scope>
    <source>
        <strain>ATCC 11796 / DSM 40854</strain>
    </source>
</reference>
<gene>
    <name type="primary">cyp105B1</name>
    <name type="synonym">subC</name>
</gene>
<dbReference type="EC" id="1.14.-.-"/>
<dbReference type="EMBL" id="M32239">
    <property type="protein sequence ID" value="AAA26825.1"/>
    <property type="molecule type" value="Genomic_DNA"/>
</dbReference>
<dbReference type="PIR" id="B35401">
    <property type="entry name" value="B35401"/>
</dbReference>
<dbReference type="SMR" id="P18327"/>
<dbReference type="GO" id="GO:0020037">
    <property type="term" value="F:heme binding"/>
    <property type="evidence" value="ECO:0007669"/>
    <property type="project" value="InterPro"/>
</dbReference>
<dbReference type="GO" id="GO:0005506">
    <property type="term" value="F:iron ion binding"/>
    <property type="evidence" value="ECO:0007669"/>
    <property type="project" value="InterPro"/>
</dbReference>
<dbReference type="GO" id="GO:0004497">
    <property type="term" value="F:monooxygenase activity"/>
    <property type="evidence" value="ECO:0007669"/>
    <property type="project" value="UniProtKB-KW"/>
</dbReference>
<dbReference type="GO" id="GO:0016705">
    <property type="term" value="F:oxidoreductase activity, acting on paired donors, with incorporation or reduction of molecular oxygen"/>
    <property type="evidence" value="ECO:0007669"/>
    <property type="project" value="InterPro"/>
</dbReference>
<dbReference type="CDD" id="cd11030">
    <property type="entry name" value="CYP105-like"/>
    <property type="match status" value="1"/>
</dbReference>
<dbReference type="FunFam" id="1.10.630.10:FF:000018">
    <property type="entry name" value="Cytochrome P450 monooxygenase"/>
    <property type="match status" value="1"/>
</dbReference>
<dbReference type="Gene3D" id="1.10.630.10">
    <property type="entry name" value="Cytochrome P450"/>
    <property type="match status" value="1"/>
</dbReference>
<dbReference type="InterPro" id="IPR001128">
    <property type="entry name" value="Cyt_P450"/>
</dbReference>
<dbReference type="InterPro" id="IPR002397">
    <property type="entry name" value="Cyt_P450_B"/>
</dbReference>
<dbReference type="InterPro" id="IPR017972">
    <property type="entry name" value="Cyt_P450_CS"/>
</dbReference>
<dbReference type="InterPro" id="IPR036396">
    <property type="entry name" value="Cyt_P450_sf"/>
</dbReference>
<dbReference type="PANTHER" id="PTHR46696:SF1">
    <property type="entry name" value="CYTOCHROME P450 YJIB-RELATED"/>
    <property type="match status" value="1"/>
</dbReference>
<dbReference type="PANTHER" id="PTHR46696">
    <property type="entry name" value="P450, PUTATIVE (EUROFUNG)-RELATED"/>
    <property type="match status" value="1"/>
</dbReference>
<dbReference type="Pfam" id="PF00067">
    <property type="entry name" value="p450"/>
    <property type="match status" value="1"/>
</dbReference>
<dbReference type="PRINTS" id="PR00359">
    <property type="entry name" value="BP450"/>
</dbReference>
<dbReference type="PRINTS" id="PR00385">
    <property type="entry name" value="P450"/>
</dbReference>
<dbReference type="SUPFAM" id="SSF48264">
    <property type="entry name" value="Cytochrome P450"/>
    <property type="match status" value="1"/>
</dbReference>
<dbReference type="PROSITE" id="PS00086">
    <property type="entry name" value="CYTOCHROME_P450"/>
    <property type="match status" value="1"/>
</dbReference>
<organism>
    <name type="scientific">Streptomyces griseolus</name>
    <dbReference type="NCBI Taxonomy" id="1909"/>
    <lineage>
        <taxon>Bacteria</taxon>
        <taxon>Bacillati</taxon>
        <taxon>Actinomycetota</taxon>
        <taxon>Actinomycetes</taxon>
        <taxon>Kitasatosporales</taxon>
        <taxon>Streptomycetaceae</taxon>
        <taxon>Streptomyces</taxon>
    </lineage>
</organism>
<proteinExistence type="evidence at protein level"/>
<protein>
    <recommendedName>
        <fullName>Cytochrome P450-SU2</fullName>
        <ecNumber>1.14.-.-</ecNumber>
    </recommendedName>
    <alternativeName>
        <fullName>CYP105B1</fullName>
    </alternativeName>
    <alternativeName>
        <fullName>Cytochrome P450-CVB1</fullName>
    </alternativeName>
</protein>
<keyword id="KW-0903">Direct protein sequencing</keyword>
<keyword id="KW-0349">Heme</keyword>
<keyword id="KW-0408">Iron</keyword>
<keyword id="KW-0479">Metal-binding</keyword>
<keyword id="KW-0503">Monooxygenase</keyword>
<keyword id="KW-0560">Oxidoreductase</keyword>